<dbReference type="EC" id="2.4.2.21" evidence="1"/>
<dbReference type="EMBL" id="CP000681">
    <property type="protein sequence ID" value="ABP76676.1"/>
    <property type="molecule type" value="Genomic_DNA"/>
</dbReference>
<dbReference type="SMR" id="A4Y9P3"/>
<dbReference type="STRING" id="319224.Sputcn32_2961"/>
<dbReference type="KEGG" id="spc:Sputcn32_2961"/>
<dbReference type="eggNOG" id="COG2038">
    <property type="taxonomic scope" value="Bacteria"/>
</dbReference>
<dbReference type="HOGENOM" id="CLU_002982_0_0_6"/>
<dbReference type="UniPathway" id="UPA00061">
    <property type="reaction ID" value="UER00516"/>
</dbReference>
<dbReference type="GO" id="GO:0008939">
    <property type="term" value="F:nicotinate-nucleotide-dimethylbenzimidazole phosphoribosyltransferase activity"/>
    <property type="evidence" value="ECO:0007669"/>
    <property type="project" value="UniProtKB-UniRule"/>
</dbReference>
<dbReference type="GO" id="GO:0009236">
    <property type="term" value="P:cobalamin biosynthetic process"/>
    <property type="evidence" value="ECO:0007669"/>
    <property type="project" value="UniProtKB-KW"/>
</dbReference>
<dbReference type="CDD" id="cd02439">
    <property type="entry name" value="DMB-PRT_CobT"/>
    <property type="match status" value="1"/>
</dbReference>
<dbReference type="FunFam" id="3.40.50.10210:FF:000001">
    <property type="entry name" value="Nicotinate-nucleotide--dimethylbenzimidazole phosphoribosyltransferase"/>
    <property type="match status" value="1"/>
</dbReference>
<dbReference type="Gene3D" id="1.10.1610.10">
    <property type="match status" value="1"/>
</dbReference>
<dbReference type="Gene3D" id="3.40.50.10210">
    <property type="match status" value="1"/>
</dbReference>
<dbReference type="HAMAP" id="MF_00230">
    <property type="entry name" value="CobT"/>
    <property type="match status" value="1"/>
</dbReference>
<dbReference type="InterPro" id="IPR003200">
    <property type="entry name" value="Nict_dMeBzImd_PRibTrfase"/>
</dbReference>
<dbReference type="InterPro" id="IPR017846">
    <property type="entry name" value="Nict_dMeBzImd_PRibTrfase_bact"/>
</dbReference>
<dbReference type="InterPro" id="IPR023195">
    <property type="entry name" value="Nict_dMeBzImd_PRibTrfase_N"/>
</dbReference>
<dbReference type="InterPro" id="IPR036087">
    <property type="entry name" value="Nict_dMeBzImd_PRibTrfase_sf"/>
</dbReference>
<dbReference type="NCBIfam" id="TIGR03160">
    <property type="entry name" value="cobT_DBIPRT"/>
    <property type="match status" value="1"/>
</dbReference>
<dbReference type="NCBIfam" id="NF000996">
    <property type="entry name" value="PRK00105.1"/>
    <property type="match status" value="1"/>
</dbReference>
<dbReference type="PANTHER" id="PTHR43463">
    <property type="entry name" value="NICOTINATE-NUCLEOTIDE--DIMETHYLBENZIMIDAZOLE PHOSPHORIBOSYLTRANSFERASE"/>
    <property type="match status" value="1"/>
</dbReference>
<dbReference type="PANTHER" id="PTHR43463:SF1">
    <property type="entry name" value="NICOTINATE-NUCLEOTIDE--DIMETHYLBENZIMIDAZOLE PHOSPHORIBOSYLTRANSFERASE"/>
    <property type="match status" value="1"/>
</dbReference>
<dbReference type="Pfam" id="PF02277">
    <property type="entry name" value="DBI_PRT"/>
    <property type="match status" value="1"/>
</dbReference>
<dbReference type="SUPFAM" id="SSF52733">
    <property type="entry name" value="Nicotinate mononucleotide:5,6-dimethylbenzimidazole phosphoribosyltransferase (CobT)"/>
    <property type="match status" value="1"/>
</dbReference>
<protein>
    <recommendedName>
        <fullName evidence="1">Nicotinate-nucleotide--dimethylbenzimidazole phosphoribosyltransferase</fullName>
        <shortName evidence="1">NN:DBI PRT</shortName>
        <ecNumber evidence="1">2.4.2.21</ecNumber>
    </recommendedName>
    <alternativeName>
        <fullName evidence="1">N(1)-alpha-phosphoribosyltransferase</fullName>
    </alternativeName>
</protein>
<organism>
    <name type="scientific">Shewanella putrefaciens (strain CN-32 / ATCC BAA-453)</name>
    <dbReference type="NCBI Taxonomy" id="319224"/>
    <lineage>
        <taxon>Bacteria</taxon>
        <taxon>Pseudomonadati</taxon>
        <taxon>Pseudomonadota</taxon>
        <taxon>Gammaproteobacteria</taxon>
        <taxon>Alteromonadales</taxon>
        <taxon>Shewanellaceae</taxon>
        <taxon>Shewanella</taxon>
    </lineage>
</organism>
<gene>
    <name evidence="1" type="primary">cobT</name>
    <name type="ordered locus">Sputcn32_2961</name>
</gene>
<reference key="1">
    <citation type="submission" date="2007-04" db="EMBL/GenBank/DDBJ databases">
        <title>Complete sequence of Shewanella putrefaciens CN-32.</title>
        <authorList>
            <consortium name="US DOE Joint Genome Institute"/>
            <person name="Copeland A."/>
            <person name="Lucas S."/>
            <person name="Lapidus A."/>
            <person name="Barry K."/>
            <person name="Detter J.C."/>
            <person name="Glavina del Rio T."/>
            <person name="Hammon N."/>
            <person name="Israni S."/>
            <person name="Dalin E."/>
            <person name="Tice H."/>
            <person name="Pitluck S."/>
            <person name="Chain P."/>
            <person name="Malfatti S."/>
            <person name="Shin M."/>
            <person name="Vergez L."/>
            <person name="Schmutz J."/>
            <person name="Larimer F."/>
            <person name="Land M."/>
            <person name="Hauser L."/>
            <person name="Kyrpides N."/>
            <person name="Mikhailova N."/>
            <person name="Romine M.F."/>
            <person name="Fredrickson J."/>
            <person name="Tiedje J."/>
            <person name="Richardson P."/>
        </authorList>
    </citation>
    <scope>NUCLEOTIDE SEQUENCE [LARGE SCALE GENOMIC DNA]</scope>
    <source>
        <strain>CN-32 / ATCC BAA-453</strain>
    </source>
</reference>
<proteinExistence type="inferred from homology"/>
<name>COBT_SHEPC</name>
<keyword id="KW-0169">Cobalamin biosynthesis</keyword>
<keyword id="KW-0328">Glycosyltransferase</keyword>
<keyword id="KW-0808">Transferase</keyword>
<comment type="function">
    <text evidence="1">Catalyzes the synthesis of alpha-ribazole-5'-phosphate from nicotinate mononucleotide (NAMN) and 5,6-dimethylbenzimidazole (DMB).</text>
</comment>
<comment type="catalytic activity">
    <reaction evidence="1">
        <text>5,6-dimethylbenzimidazole + nicotinate beta-D-ribonucleotide = alpha-ribazole 5'-phosphate + nicotinate + H(+)</text>
        <dbReference type="Rhea" id="RHEA:11196"/>
        <dbReference type="ChEBI" id="CHEBI:15378"/>
        <dbReference type="ChEBI" id="CHEBI:15890"/>
        <dbReference type="ChEBI" id="CHEBI:32544"/>
        <dbReference type="ChEBI" id="CHEBI:57502"/>
        <dbReference type="ChEBI" id="CHEBI:57918"/>
        <dbReference type="EC" id="2.4.2.21"/>
    </reaction>
</comment>
<comment type="pathway">
    <text evidence="1">Nucleoside biosynthesis; alpha-ribazole biosynthesis; alpha-ribazole from 5,6-dimethylbenzimidazole: step 1/2.</text>
</comment>
<comment type="similarity">
    <text evidence="1">Belongs to the CobT family.</text>
</comment>
<evidence type="ECO:0000255" key="1">
    <source>
        <dbReference type="HAMAP-Rule" id="MF_00230"/>
    </source>
</evidence>
<accession>A4Y9P3</accession>
<sequence length="350" mass="36877">MSQSAVSFQINSVSKVQEQLIQQKINLKTKPLGALGQLESLALQIARIQGADQPYIANPTMLVFAGDHGIAAEGVSIAPSEVTRQMVQNFAHGGAAINVFCRQVGFKLEVIDCGILTPIEGVKGIIDQRLGAGTGAIHLEPAMALETVDKGFAMARDLIERHHQAGCNLVAFGEMGIGNTSAASAIMAAIMQLDVIDCVGRGTGINQETLARKLMLIELALLLHQSALTGPKEVLACLGGFEIVQMTGAMLAAAERNMLVVVDGFIATAAALVAVTIAPNVRDYLIFAHQSDEQGHLRMLEFLQAKPLLSLGLRLGEGTGAALALPLIQAAVNFYNQMASFSDAGIEAVV</sequence>
<feature type="chain" id="PRO_1000021629" description="Nicotinate-nucleotide--dimethylbenzimidazole phosphoribosyltransferase">
    <location>
        <begin position="1"/>
        <end position="350"/>
    </location>
</feature>
<feature type="active site" description="Proton acceptor" evidence="1">
    <location>
        <position position="317"/>
    </location>
</feature>